<organism>
    <name type="scientific">Metallosphaera sedula (strain ATCC 51363 / DSM 5348 / JCM 9185 / NBRC 15509 / TH2)</name>
    <dbReference type="NCBI Taxonomy" id="399549"/>
    <lineage>
        <taxon>Archaea</taxon>
        <taxon>Thermoproteota</taxon>
        <taxon>Thermoprotei</taxon>
        <taxon>Sulfolobales</taxon>
        <taxon>Sulfolobaceae</taxon>
        <taxon>Metallosphaera</taxon>
    </lineage>
</organism>
<keyword id="KW-0066">ATP synthesis</keyword>
<keyword id="KW-1003">Cell membrane</keyword>
<keyword id="KW-0375">Hydrogen ion transport</keyword>
<keyword id="KW-0406">Ion transport</keyword>
<keyword id="KW-0472">Membrane</keyword>
<keyword id="KW-1185">Reference proteome</keyword>
<keyword id="KW-0813">Transport</keyword>
<proteinExistence type="inferred from homology"/>
<sequence>MVSVEELMGQVIDSEMEVISKELSKALEEALNLVKQKRDSVERTYTAKMQEMVTKAKEEIEGERARLDIEVKRAVLGEKNYWLNKVYEGTIKSLGTVKNSQGYKQGLESVLKRELRDGSIVYCSEDEVDQVQKMIKGLKAKAEVRSDPKIMGGVKIQYSDVGLVRDYSLNLILDQVFESLKPKIAEILFGEM</sequence>
<dbReference type="EMBL" id="CP000682">
    <property type="protein sequence ID" value="ABP96056.1"/>
    <property type="molecule type" value="Genomic_DNA"/>
</dbReference>
<dbReference type="RefSeq" id="WP_012021843.1">
    <property type="nucleotide sequence ID" value="NZ_CP139956.1"/>
</dbReference>
<dbReference type="SMR" id="A4YI04"/>
<dbReference type="STRING" id="399549.Msed_1916"/>
<dbReference type="KEGG" id="mse:Msed_1916"/>
<dbReference type="eggNOG" id="arCOG00869">
    <property type="taxonomic scope" value="Archaea"/>
</dbReference>
<dbReference type="HOGENOM" id="CLU_1412391_0_0_2"/>
<dbReference type="Proteomes" id="UP000000242">
    <property type="component" value="Chromosome"/>
</dbReference>
<dbReference type="GO" id="GO:0005886">
    <property type="term" value="C:plasma membrane"/>
    <property type="evidence" value="ECO:0007669"/>
    <property type="project" value="UniProtKB-SubCell"/>
</dbReference>
<dbReference type="GO" id="GO:0033178">
    <property type="term" value="C:proton-transporting two-sector ATPase complex, catalytic domain"/>
    <property type="evidence" value="ECO:0007669"/>
    <property type="project" value="InterPro"/>
</dbReference>
<dbReference type="GO" id="GO:0005524">
    <property type="term" value="F:ATP binding"/>
    <property type="evidence" value="ECO:0007669"/>
    <property type="project" value="UniProtKB-UniRule"/>
</dbReference>
<dbReference type="GO" id="GO:0046933">
    <property type="term" value="F:proton-transporting ATP synthase activity, rotational mechanism"/>
    <property type="evidence" value="ECO:0007669"/>
    <property type="project" value="UniProtKB-UniRule"/>
</dbReference>
<dbReference type="GO" id="GO:0046961">
    <property type="term" value="F:proton-transporting ATPase activity, rotational mechanism"/>
    <property type="evidence" value="ECO:0007669"/>
    <property type="project" value="InterPro"/>
</dbReference>
<dbReference type="GO" id="GO:0042777">
    <property type="term" value="P:proton motive force-driven plasma membrane ATP synthesis"/>
    <property type="evidence" value="ECO:0007669"/>
    <property type="project" value="UniProtKB-UniRule"/>
</dbReference>
<dbReference type="Gene3D" id="3.30.2320.30">
    <property type="entry name" value="ATP synthase, E subunit, C-terminal"/>
    <property type="match status" value="1"/>
</dbReference>
<dbReference type="HAMAP" id="MF_00311">
    <property type="entry name" value="ATP_synth_E_arch"/>
    <property type="match status" value="1"/>
</dbReference>
<dbReference type="InterPro" id="IPR038495">
    <property type="entry name" value="ATPase_E_C"/>
</dbReference>
<dbReference type="InterPro" id="IPR002842">
    <property type="entry name" value="ATPase_V1_Esu"/>
</dbReference>
<dbReference type="Pfam" id="PF01991">
    <property type="entry name" value="vATP-synt_E"/>
    <property type="match status" value="1"/>
</dbReference>
<dbReference type="SUPFAM" id="SSF160527">
    <property type="entry name" value="V-type ATPase subunit E-like"/>
    <property type="match status" value="1"/>
</dbReference>
<comment type="function">
    <text evidence="1">Component of the A-type ATP synthase that produces ATP from ADP in the presence of a proton gradient across the membrane.</text>
</comment>
<comment type="subunit">
    <text evidence="1">Has multiple subunits with at least A(3), B(3), C, D, E, F, H, I and proteolipid K(x).</text>
</comment>
<comment type="subcellular location">
    <subcellularLocation>
        <location evidence="1">Cell membrane</location>
        <topology evidence="1">Peripheral membrane protein</topology>
    </subcellularLocation>
</comment>
<comment type="similarity">
    <text evidence="1">Belongs to the V-ATPase E subunit family.</text>
</comment>
<reference key="1">
    <citation type="journal article" date="2008" name="Appl. Environ. Microbiol.">
        <title>The genome sequence of the metal-mobilizing, extremely thermoacidophilic archaeon Metallosphaera sedula provides insights into bioleaching-associated metabolism.</title>
        <authorList>
            <person name="Auernik K.S."/>
            <person name="Maezato Y."/>
            <person name="Blum P.H."/>
            <person name="Kelly R.M."/>
        </authorList>
    </citation>
    <scope>NUCLEOTIDE SEQUENCE [LARGE SCALE GENOMIC DNA]</scope>
    <source>
        <strain>ATCC 51363 / DSM 5348 / JCM 9185 / NBRC 15509 / TH2</strain>
    </source>
</reference>
<gene>
    <name evidence="1" type="primary">atpE</name>
    <name type="ordered locus">Msed_1916</name>
</gene>
<protein>
    <recommendedName>
        <fullName evidence="1">A-type ATP synthase subunit E</fullName>
    </recommendedName>
</protein>
<name>AATE_METS5</name>
<feature type="chain" id="PRO_0000322529" description="A-type ATP synthase subunit E">
    <location>
        <begin position="1"/>
        <end position="192"/>
    </location>
</feature>
<accession>A4YI04</accession>
<evidence type="ECO:0000255" key="1">
    <source>
        <dbReference type="HAMAP-Rule" id="MF_00311"/>
    </source>
</evidence>